<accession>B2SWY4</accession>
<proteinExistence type="inferred from homology"/>
<comment type="function">
    <text evidence="1">Catalyzes the transfer of endogenously produced octanoic acid from octanoyl-acyl-carrier-protein onto the lipoyl domains of lipoate-dependent enzymes. Lipoyl-ACP can also act as a substrate although octanoyl-ACP is likely to be the physiological substrate.</text>
</comment>
<comment type="catalytic activity">
    <reaction evidence="1">
        <text>octanoyl-[ACP] + L-lysyl-[protein] = N(6)-octanoyl-L-lysyl-[protein] + holo-[ACP] + H(+)</text>
        <dbReference type="Rhea" id="RHEA:17665"/>
        <dbReference type="Rhea" id="RHEA-COMP:9636"/>
        <dbReference type="Rhea" id="RHEA-COMP:9685"/>
        <dbReference type="Rhea" id="RHEA-COMP:9752"/>
        <dbReference type="Rhea" id="RHEA-COMP:9928"/>
        <dbReference type="ChEBI" id="CHEBI:15378"/>
        <dbReference type="ChEBI" id="CHEBI:29969"/>
        <dbReference type="ChEBI" id="CHEBI:64479"/>
        <dbReference type="ChEBI" id="CHEBI:78463"/>
        <dbReference type="ChEBI" id="CHEBI:78809"/>
        <dbReference type="EC" id="2.3.1.181"/>
    </reaction>
</comment>
<comment type="pathway">
    <text evidence="1">Protein modification; protein lipoylation via endogenous pathway; protein N(6)-(lipoyl)lysine from octanoyl-[acyl-carrier-protein]: step 1/2.</text>
</comment>
<comment type="subcellular location">
    <subcellularLocation>
        <location evidence="1">Cytoplasm</location>
    </subcellularLocation>
</comment>
<comment type="miscellaneous">
    <text evidence="1">In the reaction, the free carboxyl group of octanoic acid is attached via an amide linkage to the epsilon-amino group of a specific lysine residue of lipoyl domains of lipoate-dependent enzymes.</text>
</comment>
<comment type="similarity">
    <text evidence="1">Belongs to the LipB family.</text>
</comment>
<evidence type="ECO:0000255" key="1">
    <source>
        <dbReference type="HAMAP-Rule" id="MF_00013"/>
    </source>
</evidence>
<evidence type="ECO:0000255" key="2">
    <source>
        <dbReference type="PROSITE-ProRule" id="PRU01067"/>
    </source>
</evidence>
<keyword id="KW-0012">Acyltransferase</keyword>
<keyword id="KW-0963">Cytoplasm</keyword>
<keyword id="KW-0808">Transferase</keyword>
<sequence>MCATPVSPTPLPSTTPLTLRWRGSEPYEASFEAMRTFTDERTADTPDEIWLVEHPPVFTLGQAGNPAHLLAADSGIPLVKVDRGGQITYHGPGQVVAYLLLDLRRRKLMVRELVTRIEQAVIDTLAAYNLAGERKAGAPGIYVAPGPDVGLHAGAKIAALGLKIRNGCSYHGVSLNVNMDLRPFLAINPCGYAGLETVDMATLGVAAGWDDVARTFAERLTANLDGSPAAVAQPQAGVLTA</sequence>
<reference key="1">
    <citation type="journal article" date="2011" name="J. Bacteriol.">
        <title>Complete genome sequence of the plant growth-promoting endophyte Burkholderia phytofirmans strain PsJN.</title>
        <authorList>
            <person name="Weilharter A."/>
            <person name="Mitter B."/>
            <person name="Shin M.V."/>
            <person name="Chain P.S."/>
            <person name="Nowak J."/>
            <person name="Sessitsch A."/>
        </authorList>
    </citation>
    <scope>NUCLEOTIDE SEQUENCE [LARGE SCALE GENOMIC DNA]</scope>
    <source>
        <strain>DSM 17436 / LMG 22146 / PsJN</strain>
    </source>
</reference>
<gene>
    <name evidence="1" type="primary">lipB</name>
    <name type="ordered locus">Bphyt_0503</name>
</gene>
<feature type="chain" id="PRO_1000089447" description="Octanoyltransferase">
    <location>
        <begin position="1"/>
        <end position="241"/>
    </location>
</feature>
<feature type="domain" description="BPL/LPL catalytic" evidence="2">
    <location>
        <begin position="43"/>
        <end position="228"/>
    </location>
</feature>
<feature type="active site" description="Acyl-thioester intermediate" evidence="1">
    <location>
        <position position="190"/>
    </location>
</feature>
<feature type="binding site" evidence="1">
    <location>
        <begin position="83"/>
        <end position="90"/>
    </location>
    <ligand>
        <name>substrate</name>
    </ligand>
</feature>
<feature type="binding site" evidence="1">
    <location>
        <begin position="159"/>
        <end position="161"/>
    </location>
    <ligand>
        <name>substrate</name>
    </ligand>
</feature>
<feature type="binding site" evidence="1">
    <location>
        <begin position="172"/>
        <end position="174"/>
    </location>
    <ligand>
        <name>substrate</name>
    </ligand>
</feature>
<feature type="site" description="Lowers pKa of active site Cys" evidence="1">
    <location>
        <position position="156"/>
    </location>
</feature>
<organism>
    <name type="scientific">Paraburkholderia phytofirmans (strain DSM 17436 / LMG 22146 / PsJN)</name>
    <name type="common">Burkholderia phytofirmans</name>
    <dbReference type="NCBI Taxonomy" id="398527"/>
    <lineage>
        <taxon>Bacteria</taxon>
        <taxon>Pseudomonadati</taxon>
        <taxon>Pseudomonadota</taxon>
        <taxon>Betaproteobacteria</taxon>
        <taxon>Burkholderiales</taxon>
        <taxon>Burkholderiaceae</taxon>
        <taxon>Paraburkholderia</taxon>
    </lineage>
</organism>
<name>LIPB_PARPJ</name>
<protein>
    <recommendedName>
        <fullName evidence="1">Octanoyltransferase</fullName>
        <ecNumber evidence="1">2.3.1.181</ecNumber>
    </recommendedName>
    <alternativeName>
        <fullName evidence="1">Lipoate-protein ligase B</fullName>
    </alternativeName>
    <alternativeName>
        <fullName evidence="1">Lipoyl/octanoyl transferase</fullName>
    </alternativeName>
    <alternativeName>
        <fullName evidence="1">Octanoyl-[acyl-carrier-protein]-protein N-octanoyltransferase</fullName>
    </alternativeName>
</protein>
<dbReference type="EC" id="2.3.1.181" evidence="1"/>
<dbReference type="EMBL" id="CP001052">
    <property type="protein sequence ID" value="ACD14928.1"/>
    <property type="molecule type" value="Genomic_DNA"/>
</dbReference>
<dbReference type="RefSeq" id="WP_012431570.1">
    <property type="nucleotide sequence ID" value="NC_010681.1"/>
</dbReference>
<dbReference type="SMR" id="B2SWY4"/>
<dbReference type="STRING" id="398527.Bphyt_0503"/>
<dbReference type="KEGG" id="bpy:Bphyt_0503"/>
<dbReference type="eggNOG" id="COG0321">
    <property type="taxonomic scope" value="Bacteria"/>
</dbReference>
<dbReference type="HOGENOM" id="CLU_035168_3_1_4"/>
<dbReference type="OrthoDB" id="9787061at2"/>
<dbReference type="UniPathway" id="UPA00538">
    <property type="reaction ID" value="UER00592"/>
</dbReference>
<dbReference type="Proteomes" id="UP000001739">
    <property type="component" value="Chromosome 1"/>
</dbReference>
<dbReference type="GO" id="GO:0005737">
    <property type="term" value="C:cytoplasm"/>
    <property type="evidence" value="ECO:0007669"/>
    <property type="project" value="UniProtKB-SubCell"/>
</dbReference>
<dbReference type="GO" id="GO:0033819">
    <property type="term" value="F:lipoyl(octanoyl) transferase activity"/>
    <property type="evidence" value="ECO:0007669"/>
    <property type="project" value="UniProtKB-EC"/>
</dbReference>
<dbReference type="GO" id="GO:0036211">
    <property type="term" value="P:protein modification process"/>
    <property type="evidence" value="ECO:0007669"/>
    <property type="project" value="InterPro"/>
</dbReference>
<dbReference type="CDD" id="cd16444">
    <property type="entry name" value="LipB"/>
    <property type="match status" value="1"/>
</dbReference>
<dbReference type="FunFam" id="3.30.930.10:FF:000020">
    <property type="entry name" value="Octanoyltransferase"/>
    <property type="match status" value="1"/>
</dbReference>
<dbReference type="Gene3D" id="3.30.930.10">
    <property type="entry name" value="Bira Bifunctional Protein, Domain 2"/>
    <property type="match status" value="1"/>
</dbReference>
<dbReference type="HAMAP" id="MF_00013">
    <property type="entry name" value="LipB"/>
    <property type="match status" value="1"/>
</dbReference>
<dbReference type="InterPro" id="IPR045864">
    <property type="entry name" value="aa-tRNA-synth_II/BPL/LPL"/>
</dbReference>
<dbReference type="InterPro" id="IPR004143">
    <property type="entry name" value="BPL_LPL_catalytic"/>
</dbReference>
<dbReference type="InterPro" id="IPR000544">
    <property type="entry name" value="Octanoyltransferase"/>
</dbReference>
<dbReference type="InterPro" id="IPR020605">
    <property type="entry name" value="Octanoyltransferase_CS"/>
</dbReference>
<dbReference type="NCBIfam" id="TIGR00214">
    <property type="entry name" value="lipB"/>
    <property type="match status" value="1"/>
</dbReference>
<dbReference type="NCBIfam" id="NF010922">
    <property type="entry name" value="PRK14342.1"/>
    <property type="match status" value="1"/>
</dbReference>
<dbReference type="NCBIfam" id="NF010923">
    <property type="entry name" value="PRK14343.1"/>
    <property type="match status" value="1"/>
</dbReference>
<dbReference type="PANTHER" id="PTHR10993:SF7">
    <property type="entry name" value="LIPOYLTRANSFERASE 2, MITOCHONDRIAL-RELATED"/>
    <property type="match status" value="1"/>
</dbReference>
<dbReference type="PANTHER" id="PTHR10993">
    <property type="entry name" value="OCTANOYLTRANSFERASE"/>
    <property type="match status" value="1"/>
</dbReference>
<dbReference type="Pfam" id="PF21948">
    <property type="entry name" value="LplA-B_cat"/>
    <property type="match status" value="1"/>
</dbReference>
<dbReference type="PIRSF" id="PIRSF016262">
    <property type="entry name" value="LPLase"/>
    <property type="match status" value="1"/>
</dbReference>
<dbReference type="SUPFAM" id="SSF55681">
    <property type="entry name" value="Class II aaRS and biotin synthetases"/>
    <property type="match status" value="1"/>
</dbReference>
<dbReference type="PROSITE" id="PS51733">
    <property type="entry name" value="BPL_LPL_CATALYTIC"/>
    <property type="match status" value="1"/>
</dbReference>
<dbReference type="PROSITE" id="PS01313">
    <property type="entry name" value="LIPB"/>
    <property type="match status" value="1"/>
</dbReference>